<dbReference type="EC" id="6.1.1.20" evidence="1"/>
<dbReference type="EMBL" id="CP001173">
    <property type="protein sequence ID" value="ACI27747.1"/>
    <property type="molecule type" value="Genomic_DNA"/>
</dbReference>
<dbReference type="RefSeq" id="WP_000557112.1">
    <property type="nucleotide sequence ID" value="NC_011333.1"/>
</dbReference>
<dbReference type="SMR" id="B5Z848"/>
<dbReference type="KEGG" id="hpg:HPG27_994"/>
<dbReference type="HOGENOM" id="CLU_025086_0_1_7"/>
<dbReference type="Proteomes" id="UP000001735">
    <property type="component" value="Chromosome"/>
</dbReference>
<dbReference type="GO" id="GO:0005737">
    <property type="term" value="C:cytoplasm"/>
    <property type="evidence" value="ECO:0007669"/>
    <property type="project" value="UniProtKB-SubCell"/>
</dbReference>
<dbReference type="GO" id="GO:0005524">
    <property type="term" value="F:ATP binding"/>
    <property type="evidence" value="ECO:0007669"/>
    <property type="project" value="UniProtKB-UniRule"/>
</dbReference>
<dbReference type="GO" id="GO:0000287">
    <property type="term" value="F:magnesium ion binding"/>
    <property type="evidence" value="ECO:0007669"/>
    <property type="project" value="UniProtKB-UniRule"/>
</dbReference>
<dbReference type="GO" id="GO:0004826">
    <property type="term" value="F:phenylalanine-tRNA ligase activity"/>
    <property type="evidence" value="ECO:0007669"/>
    <property type="project" value="UniProtKB-UniRule"/>
</dbReference>
<dbReference type="GO" id="GO:0000049">
    <property type="term" value="F:tRNA binding"/>
    <property type="evidence" value="ECO:0007669"/>
    <property type="project" value="InterPro"/>
</dbReference>
<dbReference type="GO" id="GO:0006432">
    <property type="term" value="P:phenylalanyl-tRNA aminoacylation"/>
    <property type="evidence" value="ECO:0007669"/>
    <property type="project" value="UniProtKB-UniRule"/>
</dbReference>
<dbReference type="CDD" id="cd00496">
    <property type="entry name" value="PheRS_alpha_core"/>
    <property type="match status" value="1"/>
</dbReference>
<dbReference type="FunFam" id="3.30.930.10:FF:000127">
    <property type="entry name" value="Phenylalanine--tRNA ligase alpha subunit"/>
    <property type="match status" value="1"/>
</dbReference>
<dbReference type="Gene3D" id="3.30.930.10">
    <property type="entry name" value="Bira Bifunctional Protein, Domain 2"/>
    <property type="match status" value="1"/>
</dbReference>
<dbReference type="HAMAP" id="MF_00281">
    <property type="entry name" value="Phe_tRNA_synth_alpha1"/>
    <property type="match status" value="1"/>
</dbReference>
<dbReference type="InterPro" id="IPR006195">
    <property type="entry name" value="aa-tRNA-synth_II"/>
</dbReference>
<dbReference type="InterPro" id="IPR045864">
    <property type="entry name" value="aa-tRNA-synth_II/BPL/LPL"/>
</dbReference>
<dbReference type="InterPro" id="IPR004529">
    <property type="entry name" value="Phe-tRNA-synth_IIc_asu"/>
</dbReference>
<dbReference type="InterPro" id="IPR004188">
    <property type="entry name" value="Phe-tRNA_ligase_II_N"/>
</dbReference>
<dbReference type="InterPro" id="IPR022911">
    <property type="entry name" value="Phe_tRNA_ligase_alpha1_bac"/>
</dbReference>
<dbReference type="InterPro" id="IPR002319">
    <property type="entry name" value="Phenylalanyl-tRNA_Synthase"/>
</dbReference>
<dbReference type="InterPro" id="IPR010978">
    <property type="entry name" value="tRNA-bd_arm"/>
</dbReference>
<dbReference type="NCBIfam" id="TIGR00468">
    <property type="entry name" value="pheS"/>
    <property type="match status" value="1"/>
</dbReference>
<dbReference type="PANTHER" id="PTHR11538:SF41">
    <property type="entry name" value="PHENYLALANINE--TRNA LIGASE, MITOCHONDRIAL"/>
    <property type="match status" value="1"/>
</dbReference>
<dbReference type="PANTHER" id="PTHR11538">
    <property type="entry name" value="PHENYLALANYL-TRNA SYNTHETASE"/>
    <property type="match status" value="1"/>
</dbReference>
<dbReference type="Pfam" id="PF02912">
    <property type="entry name" value="Phe_tRNA-synt_N"/>
    <property type="match status" value="1"/>
</dbReference>
<dbReference type="Pfam" id="PF01409">
    <property type="entry name" value="tRNA-synt_2d"/>
    <property type="match status" value="1"/>
</dbReference>
<dbReference type="SUPFAM" id="SSF55681">
    <property type="entry name" value="Class II aaRS and biotin synthetases"/>
    <property type="match status" value="1"/>
</dbReference>
<dbReference type="SUPFAM" id="SSF46589">
    <property type="entry name" value="tRNA-binding arm"/>
    <property type="match status" value="1"/>
</dbReference>
<dbReference type="PROSITE" id="PS50862">
    <property type="entry name" value="AA_TRNA_LIGASE_II"/>
    <property type="match status" value="1"/>
</dbReference>
<feature type="chain" id="PRO_1000114880" description="Phenylalanine--tRNA ligase alpha subunit">
    <location>
        <begin position="1"/>
        <end position="328"/>
    </location>
</feature>
<feature type="binding site" evidence="1">
    <location>
        <position position="245"/>
    </location>
    <ligand>
        <name>Mg(2+)</name>
        <dbReference type="ChEBI" id="CHEBI:18420"/>
        <note>shared with beta subunit</note>
    </ligand>
</feature>
<proteinExistence type="inferred from homology"/>
<keyword id="KW-0030">Aminoacyl-tRNA synthetase</keyword>
<keyword id="KW-0067">ATP-binding</keyword>
<keyword id="KW-0963">Cytoplasm</keyword>
<keyword id="KW-0436">Ligase</keyword>
<keyword id="KW-0460">Magnesium</keyword>
<keyword id="KW-0479">Metal-binding</keyword>
<keyword id="KW-0547">Nucleotide-binding</keyword>
<keyword id="KW-0648">Protein biosynthesis</keyword>
<keyword id="KW-1185">Reference proteome</keyword>
<reference key="1">
    <citation type="journal article" date="2009" name="J. Bacteriol.">
        <title>The complete genome sequence of Helicobacter pylori strain G27.</title>
        <authorList>
            <person name="Baltrus D.A."/>
            <person name="Amieva M.R."/>
            <person name="Covacci A."/>
            <person name="Lowe T.M."/>
            <person name="Merrell D.S."/>
            <person name="Ottemann K.M."/>
            <person name="Stein M."/>
            <person name="Salama N.R."/>
            <person name="Guillemin K."/>
        </authorList>
    </citation>
    <scope>NUCLEOTIDE SEQUENCE [LARGE SCALE GENOMIC DNA]</scope>
    <source>
        <strain>G27</strain>
    </source>
</reference>
<evidence type="ECO:0000255" key="1">
    <source>
        <dbReference type="HAMAP-Rule" id="MF_00281"/>
    </source>
</evidence>
<gene>
    <name evidence="1" type="primary">pheS</name>
    <name type="ordered locus">HPG27_994</name>
</gene>
<accession>B5Z848</accession>
<comment type="catalytic activity">
    <reaction evidence="1">
        <text>tRNA(Phe) + L-phenylalanine + ATP = L-phenylalanyl-tRNA(Phe) + AMP + diphosphate + H(+)</text>
        <dbReference type="Rhea" id="RHEA:19413"/>
        <dbReference type="Rhea" id="RHEA-COMP:9668"/>
        <dbReference type="Rhea" id="RHEA-COMP:9699"/>
        <dbReference type="ChEBI" id="CHEBI:15378"/>
        <dbReference type="ChEBI" id="CHEBI:30616"/>
        <dbReference type="ChEBI" id="CHEBI:33019"/>
        <dbReference type="ChEBI" id="CHEBI:58095"/>
        <dbReference type="ChEBI" id="CHEBI:78442"/>
        <dbReference type="ChEBI" id="CHEBI:78531"/>
        <dbReference type="ChEBI" id="CHEBI:456215"/>
        <dbReference type="EC" id="6.1.1.20"/>
    </reaction>
</comment>
<comment type="cofactor">
    <cofactor evidence="1">
        <name>Mg(2+)</name>
        <dbReference type="ChEBI" id="CHEBI:18420"/>
    </cofactor>
    <text evidence="1">Binds 2 magnesium ions per tetramer.</text>
</comment>
<comment type="subunit">
    <text evidence="1">Tetramer of two alpha and two beta subunits.</text>
</comment>
<comment type="subcellular location">
    <subcellularLocation>
        <location evidence="1">Cytoplasm</location>
    </subcellularLocation>
</comment>
<comment type="similarity">
    <text evidence="1">Belongs to the class-II aminoacyl-tRNA synthetase family. Phe-tRNA synthetase alpha subunit type 1 subfamily.</text>
</comment>
<protein>
    <recommendedName>
        <fullName evidence="1">Phenylalanine--tRNA ligase alpha subunit</fullName>
        <ecNumber evidence="1">6.1.1.20</ecNumber>
    </recommendedName>
    <alternativeName>
        <fullName evidence="1">Phenylalanyl-tRNA synthetase alpha subunit</fullName>
        <shortName evidence="1">PheRS</shortName>
    </alternativeName>
</protein>
<organism>
    <name type="scientific">Helicobacter pylori (strain G27)</name>
    <dbReference type="NCBI Taxonomy" id="563041"/>
    <lineage>
        <taxon>Bacteria</taxon>
        <taxon>Pseudomonadati</taxon>
        <taxon>Campylobacterota</taxon>
        <taxon>Epsilonproteobacteria</taxon>
        <taxon>Campylobacterales</taxon>
        <taxon>Helicobacteraceae</taxon>
        <taxon>Helicobacter</taxon>
    </lineage>
</organism>
<name>SYFA_HELPG</name>
<sequence>MHTLIERLEKVTNSKELEEVRLNALGKKGVFADKFNQLKNLNGEEKNAFAKEIHHYKQAFEKAFEWKKKAILELELEERLKKEKIDVSLFNAIKTSSSHPLNYTKNKIIEFFTPLGYKLEIGSLVEDDFHNFSALNLPPYHPARDMQDTFYFKDHKLLRTHTSPVQIHTMQEQTPPIKMICLGETFRRDYDLTHTPMFHQIEGLVVDQKGNIRFTHLKGVIEDFLHYFFGGVKLRWRSSFFPFTEPSAEVDISCVFCKQEGCRVCSHTGWLEVLGCGMVNNAVFEAIGYENVSGFAFGMGIERLAMLTCQINDLRSFFETDLRVLESF</sequence>